<feature type="chain" id="PRO_0000441772" description="Prokaryotic ubiquitin-like protein UBact">
    <location>
        <begin position="1"/>
        <end position="56"/>
    </location>
</feature>
<feature type="region of interest" description="Disordered" evidence="2">
    <location>
        <begin position="1"/>
        <end position="56"/>
    </location>
</feature>
<feature type="compositionally biased region" description="Basic and acidic residues" evidence="2">
    <location>
        <begin position="30"/>
        <end position="46"/>
    </location>
</feature>
<feature type="cross-link" description="Isoglutamyl lysine isopeptide (Glu-Lys) (interchain with K-? in acceptor proteins)" evidence="4">
    <location>
        <position position="56"/>
    </location>
</feature>
<evidence type="ECO:0000255" key="1">
    <source>
        <dbReference type="HAMAP-Rule" id="MF_02133"/>
    </source>
</evidence>
<evidence type="ECO:0000256" key="2">
    <source>
        <dbReference type="SAM" id="MobiDB-lite"/>
    </source>
</evidence>
<evidence type="ECO:0000303" key="3">
    <source>
    </source>
</evidence>
<evidence type="ECO:0000305" key="4"/>
<evidence type="ECO:0000305" key="5">
    <source>
    </source>
</evidence>
<evidence type="ECO:0000312" key="6">
    <source>
        <dbReference type="EMBL" id="BAL58331.1"/>
    </source>
</evidence>
<proteinExistence type="inferred from homology"/>
<reference key="1">
    <citation type="journal article" date="2012" name="PLoS ONE">
        <title>A deeply branching thermophilic bacterium with an ancient acetyl-CoA pathway dominates a subsurface ecosystem.</title>
        <authorList>
            <person name="Takami H."/>
            <person name="Noguchi H."/>
            <person name="Takaki Y."/>
            <person name="Uchiyama I."/>
            <person name="Toyoda A."/>
            <person name="Nishi S."/>
            <person name="Chee G.J."/>
            <person name="Arai W."/>
            <person name="Nunoura T."/>
            <person name="Itoh T."/>
            <person name="Hattori M."/>
            <person name="Takai K."/>
        </authorList>
    </citation>
    <scope>NUCLEOTIDE SEQUENCE [LARGE SCALE GENOMIC DNA]</scope>
</reference>
<reference key="2">
    <citation type="journal article" date="2017" name="Biochem. Biophys. Res. Commun.">
        <title>Identification of UBact, a ubiquitin-like protein, along with other homologous components of a conjugation system and the proteasome in different gram-negative bacteria.</title>
        <authorList>
            <person name="Lehmann G."/>
            <person name="Udasin R.G."/>
            <person name="Livneh I."/>
            <person name="Ciechanover A."/>
        </authorList>
    </citation>
    <scope>PREDICTED FUNCTION</scope>
</reference>
<organism>
    <name type="scientific">Acetithermum autotrophicum</name>
    <dbReference type="NCBI Taxonomy" id="1446466"/>
    <lineage>
        <taxon>Bacteria</taxon>
        <taxon>Candidatus Bipolaricaulota</taxon>
        <taxon>Candidatus Acetithermum</taxon>
    </lineage>
</organism>
<keyword id="KW-1017">Isopeptide bond</keyword>
<keyword id="KW-0833">Ubl conjugation pathway</keyword>
<comment type="function">
    <text evidence="5">May function as a protein modifier covalently attached to lysine residues of substrate proteins. This may serve to target the modified proteins for degradation by proteasomes.</text>
</comment>
<comment type="similarity">
    <text evidence="1">Belongs to the ubiquitin-like protein UBact family.</text>
</comment>
<dbReference type="EMBL" id="AP011800">
    <property type="protein sequence ID" value="BAL58331.1"/>
    <property type="molecule type" value="Genomic_DNA"/>
</dbReference>
<dbReference type="SMR" id="H5SQ95"/>
<dbReference type="GO" id="GO:0031386">
    <property type="term" value="F:protein tag activity"/>
    <property type="evidence" value="ECO:0007669"/>
    <property type="project" value="UniProtKB-UniRule"/>
</dbReference>
<dbReference type="HAMAP" id="MF_02133">
    <property type="entry name" value="UBact"/>
    <property type="match status" value="1"/>
</dbReference>
<dbReference type="InterPro" id="IPR037543">
    <property type="entry name" value="UBact"/>
</dbReference>
<dbReference type="NCBIfam" id="NF033388">
    <property type="entry name" value="ubiq_like_UBact"/>
    <property type="match status" value="1"/>
</dbReference>
<dbReference type="Pfam" id="PF20513">
    <property type="entry name" value="UBact"/>
    <property type="match status" value="1"/>
</dbReference>
<accession>H5SQ95</accession>
<protein>
    <recommendedName>
        <fullName evidence="3">Prokaryotic ubiquitin-like protein UBact</fullName>
    </recommendedName>
</protein>
<name>UBACT_ACEAU</name>
<sequence length="56" mass="6594">MPERIVKPMPQDPVTKPGDEGPRTPNVPKPDTERLLERMRRVDPRQAQRYRQRSGE</sequence>
<gene>
    <name evidence="3" type="primary">ubact</name>
    <name evidence="6" type="ORF">HGMM_OP1C026</name>
</gene>